<keyword id="KW-0028">Amino-acid biosynthesis</keyword>
<keyword id="KW-0057">Aromatic amino acid biosynthesis</keyword>
<keyword id="KW-0274">FAD</keyword>
<keyword id="KW-0285">Flavoprotein</keyword>
<keyword id="KW-0288">FMN</keyword>
<keyword id="KW-0456">Lyase</keyword>
<keyword id="KW-0521">NADP</keyword>
<keyword id="KW-1185">Reference proteome</keyword>
<evidence type="ECO:0000255" key="1">
    <source>
        <dbReference type="HAMAP-Rule" id="MF_00300"/>
    </source>
</evidence>
<name>AROC_SYNE7</name>
<protein>
    <recommendedName>
        <fullName evidence="1">Chorismate synthase</fullName>
        <shortName evidence="1">CS</shortName>
        <ecNumber evidence="1">4.2.3.5</ecNumber>
    </recommendedName>
    <alternativeName>
        <fullName evidence="1">5-enolpyruvylshikimate-3-phosphate phospholyase</fullName>
    </alternativeName>
</protein>
<organism>
    <name type="scientific">Synechococcus elongatus (strain ATCC 33912 / PCC 7942 / FACHB-805)</name>
    <name type="common">Anacystis nidulans R2</name>
    <dbReference type="NCBI Taxonomy" id="1140"/>
    <lineage>
        <taxon>Bacteria</taxon>
        <taxon>Bacillati</taxon>
        <taxon>Cyanobacteriota</taxon>
        <taxon>Cyanophyceae</taxon>
        <taxon>Synechococcales</taxon>
        <taxon>Synechococcaceae</taxon>
        <taxon>Synechococcus</taxon>
    </lineage>
</organism>
<reference key="1">
    <citation type="submission" date="2005-08" db="EMBL/GenBank/DDBJ databases">
        <title>Complete sequence of chromosome 1 of Synechococcus elongatus PCC 7942.</title>
        <authorList>
            <consortium name="US DOE Joint Genome Institute"/>
            <person name="Copeland A."/>
            <person name="Lucas S."/>
            <person name="Lapidus A."/>
            <person name="Barry K."/>
            <person name="Detter J.C."/>
            <person name="Glavina T."/>
            <person name="Hammon N."/>
            <person name="Israni S."/>
            <person name="Pitluck S."/>
            <person name="Schmutz J."/>
            <person name="Larimer F."/>
            <person name="Land M."/>
            <person name="Kyrpides N."/>
            <person name="Lykidis A."/>
            <person name="Golden S."/>
            <person name="Richardson P."/>
        </authorList>
    </citation>
    <scope>NUCLEOTIDE SEQUENCE [LARGE SCALE GENOMIC DNA]</scope>
    <source>
        <strain>ATCC 33912 / PCC 7942 / FACHB-805</strain>
    </source>
</reference>
<dbReference type="EC" id="4.2.3.5" evidence="1"/>
<dbReference type="EMBL" id="CP000100">
    <property type="protein sequence ID" value="ABB56244.1"/>
    <property type="molecule type" value="Genomic_DNA"/>
</dbReference>
<dbReference type="RefSeq" id="WP_011377497.1">
    <property type="nucleotide sequence ID" value="NZ_JACJTX010000002.1"/>
</dbReference>
<dbReference type="SMR" id="Q31RS5"/>
<dbReference type="STRING" id="1140.Synpcc7942_0212"/>
<dbReference type="PaxDb" id="1140-Synpcc7942_0212"/>
<dbReference type="GeneID" id="72429025"/>
<dbReference type="KEGG" id="syf:Synpcc7942_0212"/>
<dbReference type="eggNOG" id="COG0082">
    <property type="taxonomic scope" value="Bacteria"/>
</dbReference>
<dbReference type="HOGENOM" id="CLU_034547_0_1_3"/>
<dbReference type="OrthoDB" id="9771806at2"/>
<dbReference type="BioCyc" id="SYNEL:SYNPCC7942_0212-MONOMER"/>
<dbReference type="UniPathway" id="UPA00053">
    <property type="reaction ID" value="UER00090"/>
</dbReference>
<dbReference type="Proteomes" id="UP000889800">
    <property type="component" value="Chromosome"/>
</dbReference>
<dbReference type="GO" id="GO:0005829">
    <property type="term" value="C:cytosol"/>
    <property type="evidence" value="ECO:0007669"/>
    <property type="project" value="TreeGrafter"/>
</dbReference>
<dbReference type="GO" id="GO:0004107">
    <property type="term" value="F:chorismate synthase activity"/>
    <property type="evidence" value="ECO:0007669"/>
    <property type="project" value="UniProtKB-UniRule"/>
</dbReference>
<dbReference type="GO" id="GO:0010181">
    <property type="term" value="F:FMN binding"/>
    <property type="evidence" value="ECO:0007669"/>
    <property type="project" value="TreeGrafter"/>
</dbReference>
<dbReference type="GO" id="GO:0008652">
    <property type="term" value="P:amino acid biosynthetic process"/>
    <property type="evidence" value="ECO:0007669"/>
    <property type="project" value="UniProtKB-KW"/>
</dbReference>
<dbReference type="GO" id="GO:0009073">
    <property type="term" value="P:aromatic amino acid family biosynthetic process"/>
    <property type="evidence" value="ECO:0007669"/>
    <property type="project" value="UniProtKB-KW"/>
</dbReference>
<dbReference type="GO" id="GO:0009423">
    <property type="term" value="P:chorismate biosynthetic process"/>
    <property type="evidence" value="ECO:0007669"/>
    <property type="project" value="UniProtKB-UniRule"/>
</dbReference>
<dbReference type="CDD" id="cd07304">
    <property type="entry name" value="Chorismate_synthase"/>
    <property type="match status" value="1"/>
</dbReference>
<dbReference type="FunFam" id="3.60.150.10:FF:000003">
    <property type="entry name" value="Chorismate synthase"/>
    <property type="match status" value="1"/>
</dbReference>
<dbReference type="Gene3D" id="3.60.150.10">
    <property type="entry name" value="Chorismate synthase AroC"/>
    <property type="match status" value="1"/>
</dbReference>
<dbReference type="HAMAP" id="MF_00300">
    <property type="entry name" value="Chorismate_synth"/>
    <property type="match status" value="1"/>
</dbReference>
<dbReference type="InterPro" id="IPR000453">
    <property type="entry name" value="Chorismate_synth"/>
</dbReference>
<dbReference type="InterPro" id="IPR035904">
    <property type="entry name" value="Chorismate_synth_AroC_sf"/>
</dbReference>
<dbReference type="InterPro" id="IPR020541">
    <property type="entry name" value="Chorismate_synthase_CS"/>
</dbReference>
<dbReference type="NCBIfam" id="TIGR00033">
    <property type="entry name" value="aroC"/>
    <property type="match status" value="1"/>
</dbReference>
<dbReference type="NCBIfam" id="NF003793">
    <property type="entry name" value="PRK05382.1"/>
    <property type="match status" value="1"/>
</dbReference>
<dbReference type="PANTHER" id="PTHR21085">
    <property type="entry name" value="CHORISMATE SYNTHASE"/>
    <property type="match status" value="1"/>
</dbReference>
<dbReference type="PANTHER" id="PTHR21085:SF0">
    <property type="entry name" value="CHORISMATE SYNTHASE"/>
    <property type="match status" value="1"/>
</dbReference>
<dbReference type="Pfam" id="PF01264">
    <property type="entry name" value="Chorismate_synt"/>
    <property type="match status" value="1"/>
</dbReference>
<dbReference type="PIRSF" id="PIRSF001456">
    <property type="entry name" value="Chorismate_synth"/>
    <property type="match status" value="1"/>
</dbReference>
<dbReference type="SUPFAM" id="SSF103263">
    <property type="entry name" value="Chorismate synthase, AroC"/>
    <property type="match status" value="1"/>
</dbReference>
<dbReference type="PROSITE" id="PS00787">
    <property type="entry name" value="CHORISMATE_SYNTHASE_1"/>
    <property type="match status" value="1"/>
</dbReference>
<dbReference type="PROSITE" id="PS00788">
    <property type="entry name" value="CHORISMATE_SYNTHASE_2"/>
    <property type="match status" value="1"/>
</dbReference>
<dbReference type="PROSITE" id="PS00789">
    <property type="entry name" value="CHORISMATE_SYNTHASE_3"/>
    <property type="match status" value="1"/>
</dbReference>
<proteinExistence type="inferred from homology"/>
<accession>Q31RS5</accession>
<sequence>MGSSFGHLFRISTFGESHGGGVGVVIDGCPPRLEISEAEIQFELDRRRPGQSKITTPRKEADQCEILSGVVDGKTLGTPIAIVVRNKDQRSQDYSEMQVAYRPSHADATYDAKYGIRAVAGGGRSSARETIGRVAAGAIAKKLLREIAGVEIVGYVKRIKDLEGQIDPETVTLEQVESTIVRCPDEAIAPQMIDLIEAIGREGDSLGGVVECVARRVPRGLGEPVFDKLEADLAKACMSLPATKGFEIGSGFAGTEMTGSEHNDAFYTDEQGQIRTRTNRSGGTQGGISNGENIVIRVAFKPTATIRKEQETVTNSGEATTLAARGRHDPCVLPRAVPMVEAMVALVLCDHLLRQQAQCSWW</sequence>
<feature type="chain" id="PRO_0000256353" description="Chorismate synthase">
    <location>
        <begin position="1"/>
        <end position="362"/>
    </location>
</feature>
<feature type="binding site" evidence="1">
    <location>
        <position position="47"/>
    </location>
    <ligand>
        <name>NADP(+)</name>
        <dbReference type="ChEBI" id="CHEBI:58349"/>
    </ligand>
</feature>
<feature type="binding site" evidence="1">
    <location>
        <begin position="124"/>
        <end position="126"/>
    </location>
    <ligand>
        <name>FMN</name>
        <dbReference type="ChEBI" id="CHEBI:58210"/>
    </ligand>
</feature>
<feature type="binding site" evidence="1">
    <location>
        <position position="286"/>
    </location>
    <ligand>
        <name>FMN</name>
        <dbReference type="ChEBI" id="CHEBI:58210"/>
    </ligand>
</feature>
<feature type="binding site" evidence="1">
    <location>
        <begin position="301"/>
        <end position="305"/>
    </location>
    <ligand>
        <name>FMN</name>
        <dbReference type="ChEBI" id="CHEBI:58210"/>
    </ligand>
</feature>
<feature type="binding site" evidence="1">
    <location>
        <position position="327"/>
    </location>
    <ligand>
        <name>FMN</name>
        <dbReference type="ChEBI" id="CHEBI:58210"/>
    </ligand>
</feature>
<gene>
    <name evidence="1" type="primary">aroC</name>
    <name type="ordered locus">Synpcc7942_0212</name>
</gene>
<comment type="function">
    <text evidence="1">Catalyzes the anti-1,4-elimination of the C-3 phosphate and the C-6 proR hydrogen from 5-enolpyruvylshikimate-3-phosphate (EPSP) to yield chorismate, which is the branch point compound that serves as the starting substrate for the three terminal pathways of aromatic amino acid biosynthesis. This reaction introduces a second double bond into the aromatic ring system.</text>
</comment>
<comment type="catalytic activity">
    <reaction evidence="1">
        <text>5-O-(1-carboxyvinyl)-3-phosphoshikimate = chorismate + phosphate</text>
        <dbReference type="Rhea" id="RHEA:21020"/>
        <dbReference type="ChEBI" id="CHEBI:29748"/>
        <dbReference type="ChEBI" id="CHEBI:43474"/>
        <dbReference type="ChEBI" id="CHEBI:57701"/>
        <dbReference type="EC" id="4.2.3.5"/>
    </reaction>
</comment>
<comment type="cofactor">
    <cofactor evidence="1">
        <name>FMNH2</name>
        <dbReference type="ChEBI" id="CHEBI:57618"/>
    </cofactor>
    <text evidence="1">Reduced FMN (FMNH(2)).</text>
</comment>
<comment type="pathway">
    <text evidence="1">Metabolic intermediate biosynthesis; chorismate biosynthesis; chorismate from D-erythrose 4-phosphate and phosphoenolpyruvate: step 7/7.</text>
</comment>
<comment type="subunit">
    <text evidence="1">Homotetramer.</text>
</comment>
<comment type="similarity">
    <text evidence="1">Belongs to the chorismate synthase family.</text>
</comment>